<organism>
    <name type="scientific">Escherichia coli (strain 55989 / EAEC)</name>
    <dbReference type="NCBI Taxonomy" id="585055"/>
    <lineage>
        <taxon>Bacteria</taxon>
        <taxon>Pseudomonadati</taxon>
        <taxon>Pseudomonadota</taxon>
        <taxon>Gammaproteobacteria</taxon>
        <taxon>Enterobacterales</taxon>
        <taxon>Enterobacteriaceae</taxon>
        <taxon>Escherichia</taxon>
    </lineage>
</organism>
<feature type="chain" id="PRO_1000184197" description="Probable lipid kinase YegS">
    <location>
        <begin position="1"/>
        <end position="299"/>
    </location>
</feature>
<feature type="domain" description="DAGKc" evidence="1">
    <location>
        <begin position="2"/>
        <end position="133"/>
    </location>
</feature>
<feature type="active site" description="Proton acceptor" evidence="1">
    <location>
        <position position="271"/>
    </location>
</feature>
<feature type="binding site" evidence="1">
    <location>
        <position position="40"/>
    </location>
    <ligand>
        <name>ATP</name>
        <dbReference type="ChEBI" id="CHEBI:30616"/>
    </ligand>
</feature>
<feature type="binding site" evidence="1">
    <location>
        <begin position="66"/>
        <end position="72"/>
    </location>
    <ligand>
        <name>ATP</name>
        <dbReference type="ChEBI" id="CHEBI:30616"/>
    </ligand>
</feature>
<feature type="binding site" evidence="1">
    <location>
        <position position="95"/>
    </location>
    <ligand>
        <name>ATP</name>
        <dbReference type="ChEBI" id="CHEBI:30616"/>
    </ligand>
</feature>
<feature type="binding site" evidence="1">
    <location>
        <position position="215"/>
    </location>
    <ligand>
        <name>Mg(2+)</name>
        <dbReference type="ChEBI" id="CHEBI:18420"/>
    </ligand>
</feature>
<feature type="binding site" evidence="1">
    <location>
        <position position="218"/>
    </location>
    <ligand>
        <name>Mg(2+)</name>
        <dbReference type="ChEBI" id="CHEBI:18420"/>
    </ligand>
</feature>
<feature type="binding site" evidence="1">
    <location>
        <position position="220"/>
    </location>
    <ligand>
        <name>Mg(2+)</name>
        <dbReference type="ChEBI" id="CHEBI:18420"/>
    </ligand>
</feature>
<sequence length="299" mass="31988">MAEFPASLLILNGKSTDNLPLREAIMLLREEGMTIHVRVTWEKGDAARYVEEARKLGVATVIAGGGDGTINEVSTALIQCEGDDIPALGILPLGTANDFATSVGIPEALDKALKLAIAGNAIAIDMAQVNKQTCFINMATGGFGTRITTETPEKLKAALGGVSYIIHGLMRMDTLQPDRCEIRGENFHWQGDALVIGIGNGRQAGGGQQLCPNALINDGLLQLRIFTGDEILPALVSTLKSDEDNPNIIEGASSWFDIQAPHEITFNLDGEPLSGQNFHIEILPAALRCRLPPDCPLLR</sequence>
<comment type="function">
    <text evidence="1">Probably phosphorylates lipids; the in vivo substrate is unknown.</text>
</comment>
<comment type="cofactor">
    <cofactor evidence="1">
        <name>Mg(2+)</name>
        <dbReference type="ChEBI" id="CHEBI:18420"/>
    </cofactor>
    <cofactor evidence="1">
        <name>Ca(2+)</name>
        <dbReference type="ChEBI" id="CHEBI:29108"/>
    </cofactor>
    <text evidence="1">Binds 1 Mg(2+) ion per subunit. Ca(2+) may be able to substitute.</text>
</comment>
<comment type="subcellular location">
    <subcellularLocation>
        <location evidence="1">Cytoplasm</location>
    </subcellularLocation>
</comment>
<comment type="similarity">
    <text evidence="1">Belongs to the diacylglycerol/lipid kinase family. YegS lipid kinase subfamily.</text>
</comment>
<keyword id="KW-0067">ATP-binding</keyword>
<keyword id="KW-0963">Cytoplasm</keyword>
<keyword id="KW-0418">Kinase</keyword>
<keyword id="KW-0444">Lipid biosynthesis</keyword>
<keyword id="KW-0443">Lipid metabolism</keyword>
<keyword id="KW-0460">Magnesium</keyword>
<keyword id="KW-0479">Metal-binding</keyword>
<keyword id="KW-0547">Nucleotide-binding</keyword>
<keyword id="KW-0594">Phospholipid biosynthesis</keyword>
<keyword id="KW-1208">Phospholipid metabolism</keyword>
<keyword id="KW-1185">Reference proteome</keyword>
<keyword id="KW-0808">Transferase</keyword>
<evidence type="ECO:0000255" key="1">
    <source>
        <dbReference type="HAMAP-Rule" id="MF_01377"/>
    </source>
</evidence>
<protein>
    <recommendedName>
        <fullName evidence="1">Probable lipid kinase YegS</fullName>
        <ecNumber evidence="1">2.7.1.-</ecNumber>
    </recommendedName>
</protein>
<name>YEGS_ECO55</name>
<accession>B7L9V9</accession>
<gene>
    <name evidence="1" type="primary">yegS</name>
    <name type="ordered locus">EC55989_2343</name>
</gene>
<proteinExistence type="inferred from homology"/>
<dbReference type="EC" id="2.7.1.-" evidence="1"/>
<dbReference type="EMBL" id="CU928145">
    <property type="protein sequence ID" value="CAU98214.1"/>
    <property type="molecule type" value="Genomic_DNA"/>
</dbReference>
<dbReference type="RefSeq" id="WP_000807362.1">
    <property type="nucleotide sequence ID" value="NC_011748.1"/>
</dbReference>
<dbReference type="SMR" id="B7L9V9"/>
<dbReference type="GeneID" id="75205975"/>
<dbReference type="KEGG" id="eck:EC55989_2343"/>
<dbReference type="HOGENOM" id="CLU_045532_1_1_6"/>
<dbReference type="Proteomes" id="UP000000746">
    <property type="component" value="Chromosome"/>
</dbReference>
<dbReference type="GO" id="GO:0005737">
    <property type="term" value="C:cytoplasm"/>
    <property type="evidence" value="ECO:0007669"/>
    <property type="project" value="UniProtKB-SubCell"/>
</dbReference>
<dbReference type="GO" id="GO:0005886">
    <property type="term" value="C:plasma membrane"/>
    <property type="evidence" value="ECO:0007669"/>
    <property type="project" value="TreeGrafter"/>
</dbReference>
<dbReference type="GO" id="GO:0005524">
    <property type="term" value="F:ATP binding"/>
    <property type="evidence" value="ECO:0007669"/>
    <property type="project" value="UniProtKB-UniRule"/>
</dbReference>
<dbReference type="GO" id="GO:0001727">
    <property type="term" value="F:lipid kinase activity"/>
    <property type="evidence" value="ECO:0007669"/>
    <property type="project" value="UniProtKB-UniRule"/>
</dbReference>
<dbReference type="GO" id="GO:0000287">
    <property type="term" value="F:magnesium ion binding"/>
    <property type="evidence" value="ECO:0007669"/>
    <property type="project" value="UniProtKB-UniRule"/>
</dbReference>
<dbReference type="GO" id="GO:0008654">
    <property type="term" value="P:phospholipid biosynthetic process"/>
    <property type="evidence" value="ECO:0007669"/>
    <property type="project" value="UniProtKB-UniRule"/>
</dbReference>
<dbReference type="FunFam" id="2.60.200.40:FF:000008">
    <property type="entry name" value="Probable lipid kinase YegS"/>
    <property type="match status" value="1"/>
</dbReference>
<dbReference type="FunFam" id="3.40.50.10330:FF:000008">
    <property type="entry name" value="Probable lipid kinase YegS"/>
    <property type="match status" value="1"/>
</dbReference>
<dbReference type="Gene3D" id="2.60.200.40">
    <property type="match status" value="1"/>
</dbReference>
<dbReference type="Gene3D" id="3.40.50.10330">
    <property type="entry name" value="Probable inorganic polyphosphate/atp-NAD kinase, domain 1"/>
    <property type="match status" value="1"/>
</dbReference>
<dbReference type="HAMAP" id="MF_01377">
    <property type="entry name" value="YegS"/>
    <property type="match status" value="1"/>
</dbReference>
<dbReference type="InterPro" id="IPR017438">
    <property type="entry name" value="ATP-NAD_kinase_N"/>
</dbReference>
<dbReference type="InterPro" id="IPR005218">
    <property type="entry name" value="Diacylglycerol/lipid_kinase"/>
</dbReference>
<dbReference type="InterPro" id="IPR001206">
    <property type="entry name" value="Diacylglycerol_kinase_cat_dom"/>
</dbReference>
<dbReference type="InterPro" id="IPR022433">
    <property type="entry name" value="Lip_kinase_YegS"/>
</dbReference>
<dbReference type="InterPro" id="IPR050187">
    <property type="entry name" value="Lipid_Phosphate_FormReg"/>
</dbReference>
<dbReference type="InterPro" id="IPR016064">
    <property type="entry name" value="NAD/diacylglycerol_kinase_sf"/>
</dbReference>
<dbReference type="InterPro" id="IPR045540">
    <property type="entry name" value="YegS/DAGK_C"/>
</dbReference>
<dbReference type="NCBIfam" id="TIGR03702">
    <property type="entry name" value="lip_kinase_YegS"/>
    <property type="match status" value="1"/>
</dbReference>
<dbReference type="NCBIfam" id="NF009602">
    <property type="entry name" value="PRK13054.1"/>
    <property type="match status" value="1"/>
</dbReference>
<dbReference type="NCBIfam" id="TIGR00147">
    <property type="entry name" value="YegS/Rv2252/BmrU family lipid kinase"/>
    <property type="match status" value="1"/>
</dbReference>
<dbReference type="PANTHER" id="PTHR12358:SF106">
    <property type="entry name" value="LIPID KINASE YEGS"/>
    <property type="match status" value="1"/>
</dbReference>
<dbReference type="PANTHER" id="PTHR12358">
    <property type="entry name" value="SPHINGOSINE KINASE"/>
    <property type="match status" value="1"/>
</dbReference>
<dbReference type="Pfam" id="PF00781">
    <property type="entry name" value="DAGK_cat"/>
    <property type="match status" value="1"/>
</dbReference>
<dbReference type="Pfam" id="PF19279">
    <property type="entry name" value="YegS_C"/>
    <property type="match status" value="1"/>
</dbReference>
<dbReference type="SMART" id="SM00046">
    <property type="entry name" value="DAGKc"/>
    <property type="match status" value="1"/>
</dbReference>
<dbReference type="SUPFAM" id="SSF111331">
    <property type="entry name" value="NAD kinase/diacylglycerol kinase-like"/>
    <property type="match status" value="1"/>
</dbReference>
<dbReference type="PROSITE" id="PS50146">
    <property type="entry name" value="DAGK"/>
    <property type="match status" value="1"/>
</dbReference>
<reference key="1">
    <citation type="journal article" date="2009" name="PLoS Genet.">
        <title>Organised genome dynamics in the Escherichia coli species results in highly diverse adaptive paths.</title>
        <authorList>
            <person name="Touchon M."/>
            <person name="Hoede C."/>
            <person name="Tenaillon O."/>
            <person name="Barbe V."/>
            <person name="Baeriswyl S."/>
            <person name="Bidet P."/>
            <person name="Bingen E."/>
            <person name="Bonacorsi S."/>
            <person name="Bouchier C."/>
            <person name="Bouvet O."/>
            <person name="Calteau A."/>
            <person name="Chiapello H."/>
            <person name="Clermont O."/>
            <person name="Cruveiller S."/>
            <person name="Danchin A."/>
            <person name="Diard M."/>
            <person name="Dossat C."/>
            <person name="Karoui M.E."/>
            <person name="Frapy E."/>
            <person name="Garry L."/>
            <person name="Ghigo J.M."/>
            <person name="Gilles A.M."/>
            <person name="Johnson J."/>
            <person name="Le Bouguenec C."/>
            <person name="Lescat M."/>
            <person name="Mangenot S."/>
            <person name="Martinez-Jehanne V."/>
            <person name="Matic I."/>
            <person name="Nassif X."/>
            <person name="Oztas S."/>
            <person name="Petit M.A."/>
            <person name="Pichon C."/>
            <person name="Rouy Z."/>
            <person name="Ruf C.S."/>
            <person name="Schneider D."/>
            <person name="Tourret J."/>
            <person name="Vacherie B."/>
            <person name="Vallenet D."/>
            <person name="Medigue C."/>
            <person name="Rocha E.P.C."/>
            <person name="Denamur E."/>
        </authorList>
    </citation>
    <scope>NUCLEOTIDE SEQUENCE [LARGE SCALE GENOMIC DNA]</scope>
    <source>
        <strain>55989 / EAEC</strain>
    </source>
</reference>